<sequence length="799" mass="90260">MKLTDADNAADGIFFPALEQNMMGAVLINENDEVMFFNPAAEKLWGYKREEVIGNNIDMLIPRDLRPAHPEYIRHNREGGKARVEGMSRELQLEKKDGSKIWTRFALSKVSAEGKVYYLALVRDASVEMAQKEQTRQLIIAVDHLDRPVIVLDPERHIVQCNRAFTEMFGYCISEASGMQPDTLLNIPEFPADNRIRLQQLLWKTARDQDEFLLLTRTGEKIWIKASISPVYDVLAHLQNLVMTFSDITEERQIRQLEGNILAAMCSSPPFHEMGEIICRNIESVLNESHVSLFALRNGMPIHWASSSHGAEIQNAQSWSATIRQRDGAPAGILQIKTSSGAETSAFIERVADISQHMAALALEQEKSRQHIEQLIQFDPMTGLPNRNNLHNYLDDLVDKAVSPVVYLIGVDHIQDVIDSLGYAWADQALLEVVNRFREKLKPDQYLCRIEGTQFVLVSLENDVSNITQIADELRNVVSKPIMIDDKPFPLTLSIGISYDLGKNRDYLLSTAHNAMDYIRKNGGNGWQFFSPAMNEMVKERLVLGAALKEAISNNQLKLVYQPQIFAETGELYGIEALARWHDPLHGHVPPSRFIPLAEEIGEIENIGRWVIAEACRQLAEWRSQNIHIPALSVNLSALHFRSNQLPNQVSDAMHAWGIDGHQLTVEITESMMMEHDTEIFKRIQILRDMGVGLSVDDFGTGFSGLSRLVSLPVTEIKIDKSFVDRCLTEKRILALLEAITSIGQSLNLTVVAEGVETKEQFEMLRKIHCRVIQGYFFSRPLPAEEIPGWMSSVLPLKI</sequence>
<evidence type="ECO:0000255" key="1">
    <source>
        <dbReference type="PROSITE-ProRule" id="PRU00074"/>
    </source>
</evidence>
<evidence type="ECO:0000255" key="2">
    <source>
        <dbReference type="PROSITE-ProRule" id="PRU00095"/>
    </source>
</evidence>
<evidence type="ECO:0000255" key="3">
    <source>
        <dbReference type="PROSITE-ProRule" id="PRU00140"/>
    </source>
</evidence>
<evidence type="ECO:0000255" key="4">
    <source>
        <dbReference type="PROSITE-ProRule" id="PRU00141"/>
    </source>
</evidence>
<evidence type="ECO:0000269" key="5">
    <source>
    </source>
</evidence>
<evidence type="ECO:0000269" key="6">
    <source>
    </source>
</evidence>
<evidence type="ECO:0000269" key="7">
    <source>
    </source>
</evidence>
<evidence type="ECO:0000269" key="8">
    <source>
    </source>
</evidence>
<evidence type="ECO:0000269" key="9">
    <source>
    </source>
</evidence>
<evidence type="ECO:0000269" key="10">
    <source>
    </source>
</evidence>
<evidence type="ECO:0000269" key="11">
    <source>
    </source>
</evidence>
<evidence type="ECO:0000269" key="12">
    <source>
    </source>
</evidence>
<evidence type="ECO:0000269" key="13">
    <source>
    </source>
</evidence>
<evidence type="ECO:0000269" key="14">
    <source>
    </source>
</evidence>
<evidence type="ECO:0000269" key="15">
    <source>
    </source>
</evidence>
<evidence type="ECO:0000269" key="16">
    <source>
    </source>
</evidence>
<evidence type="ECO:0000303" key="17">
    <source>
    </source>
</evidence>
<evidence type="ECO:0007829" key="18">
    <source>
        <dbReference type="PDB" id="1S67"/>
    </source>
</evidence>
<evidence type="ECO:0007829" key="19">
    <source>
        <dbReference type="PDB" id="1V9Y"/>
    </source>
</evidence>
<evidence type="ECO:0007829" key="20">
    <source>
        <dbReference type="PDB" id="4HU4"/>
    </source>
</evidence>
<evidence type="ECO:0007829" key="21">
    <source>
        <dbReference type="PDB" id="9BKV"/>
    </source>
</evidence>
<evidence type="ECO:0007829" key="22">
    <source>
        <dbReference type="PDB" id="9CLO"/>
    </source>
</evidence>
<evidence type="ECO:0007829" key="23">
    <source>
        <dbReference type="PDB" id="9CMF"/>
    </source>
</evidence>
<feature type="chain" id="PRO_0000079982" description="Oxygen sensor protein DosP">
    <location>
        <begin position="1"/>
        <end position="799"/>
    </location>
</feature>
<feature type="domain" description="PAS 1" evidence="3">
    <location>
        <begin position="10"/>
        <end position="81"/>
    </location>
</feature>
<feature type="domain" description="PAS 2" evidence="3">
    <location>
        <begin position="134"/>
        <end position="207"/>
    </location>
</feature>
<feature type="domain" description="PAC" evidence="4">
    <location>
        <begin position="208"/>
        <end position="260"/>
    </location>
</feature>
<feature type="domain" description="GGDEF" evidence="2">
    <location>
        <begin position="402"/>
        <end position="532"/>
    </location>
</feature>
<feature type="domain" description="EAL" evidence="1">
    <location>
        <begin position="541"/>
        <end position="795"/>
    </location>
</feature>
<feature type="binding site" description="proximal binding residue">
    <location>
        <position position="69"/>
    </location>
    <ligand>
        <name>heme</name>
        <dbReference type="ChEBI" id="CHEBI:30413"/>
    </ligand>
    <ligandPart>
        <name>Fe</name>
        <dbReference type="ChEBI" id="CHEBI:18248"/>
    </ligandPart>
</feature>
<feature type="binding site" description="distal binding residue">
    <location>
        <position position="87"/>
    </location>
    <ligand>
        <name>heme</name>
        <dbReference type="ChEBI" id="CHEBI:30413"/>
    </ligand>
    <ligandPart>
        <name>Fe</name>
        <dbReference type="ChEBI" id="CHEBI:18248"/>
    </ligandPart>
</feature>
<feature type="mutagenesis site" description="Loss of heme binding." evidence="5 8">
    <original>H</original>
    <variation>A</variation>
    <variation>G</variation>
    <location>
        <position position="69"/>
    </location>
</feature>
<feature type="mutagenesis site" description="No loss of heme binding." evidence="5">
    <original>H</original>
    <variation>A</variation>
    <variation>G</variation>
    <location>
        <position position="75"/>
    </location>
</feature>
<feature type="mutagenesis site" description="Ferrous heme iron changes from an exclusively hexacoordinate low-spin form to an exclusively pentacoordinate high-spin form. Ferric heme iron remains hexacoordinate but becomes a mixture of high and low spin. Increases c-di-GMP PDE activity 7-fold in absence of O(2), CO or NO, no additional increase upon addition of gases (M-A only)." evidence="6 7 12">
    <original>M</original>
    <variation>A</variation>
    <variation>I</variation>
    <location>
        <position position="87"/>
    </location>
</feature>
<feature type="mutagenesis site" description="No change in heme coordination; increases c-di-GMP PDE activity 2-fold in absence of O(2), CO or NO, and 2-fold more upon addition of gases." evidence="6 7 12">
    <original>M</original>
    <variation>H</variation>
    <location>
        <position position="87"/>
    </location>
</feature>
<feature type="mutagenesis site" description="The Fe(2+)-O(2) form loses c-di-GMP PDE activity, due to reduced O(2) affinity and/or increased auto-oxidation. NO and CO forms are less affected." evidence="7 12">
    <original>R</original>
    <variation>A</variation>
    <variation>E</variation>
    <variation>I</variation>
    <location>
        <position position="89"/>
    </location>
</feature>
<feature type="mutagenesis site" description="Alters O(2) binding, increases auto-oxidation." evidence="11">
    <original>L</original>
    <variation>F</variation>
    <location>
        <position position="91"/>
    </location>
</feature>
<feature type="mutagenesis site" description="Increases auto-oxidation." evidence="11">
    <original>L</original>
    <variation>T</variation>
    <location>
        <position position="91"/>
    </location>
</feature>
<feature type="mutagenesis site" description="Significantly reduces heme-binding affinity; increases auto-oxidation." evidence="11">
    <original>L</original>
    <variation>F</variation>
    <location>
        <position position="107"/>
    </location>
</feature>
<feature type="mutagenesis site" description="Increases auto-oxidation." evidence="11">
    <original>L</original>
    <variation>T</variation>
    <location>
        <position position="107"/>
    </location>
</feature>
<feature type="mutagenesis site" description="Loss of cAMP PDE activity." evidence="8">
    <original>H</original>
    <variation>A</variation>
    <location>
        <position position="582"/>
    </location>
</feature>
<feature type="mutagenesis site" description="Loss of cAMP PDE activity." evidence="8">
    <original>H</original>
    <variation>A</variation>
    <location>
        <position position="586"/>
    </location>
</feature>
<feature type="helix" evidence="19">
    <location>
        <begin position="14"/>
        <end position="19"/>
    </location>
</feature>
<feature type="strand" evidence="19">
    <location>
        <begin position="22"/>
        <end position="28"/>
    </location>
</feature>
<feature type="strand" evidence="19">
    <location>
        <begin position="32"/>
        <end position="37"/>
    </location>
</feature>
<feature type="helix" evidence="19">
    <location>
        <begin position="39"/>
        <end position="45"/>
    </location>
</feature>
<feature type="helix" evidence="19">
    <location>
        <begin position="49"/>
        <end position="51"/>
    </location>
</feature>
<feature type="turn" evidence="19">
    <location>
        <begin position="52"/>
        <end position="54"/>
    </location>
</feature>
<feature type="helix" evidence="19">
    <location>
        <begin position="57"/>
        <end position="60"/>
    </location>
</feature>
<feature type="helix" evidence="19">
    <location>
        <begin position="63"/>
        <end position="65"/>
    </location>
</feature>
<feature type="turn" evidence="19">
    <location>
        <begin position="66"/>
        <end position="68"/>
    </location>
</feature>
<feature type="helix" evidence="19">
    <location>
        <begin position="69"/>
        <end position="77"/>
    </location>
</feature>
<feature type="turn" evidence="23">
    <location>
        <begin position="81"/>
        <end position="83"/>
    </location>
</feature>
<feature type="strand" evidence="19">
    <location>
        <begin position="90"/>
        <end position="94"/>
    </location>
</feature>
<feature type="strand" evidence="18">
    <location>
        <begin position="96"/>
        <end position="98"/>
    </location>
</feature>
<feature type="strand" evidence="19">
    <location>
        <begin position="100"/>
        <end position="112"/>
    </location>
</feature>
<feature type="strand" evidence="19">
    <location>
        <begin position="115"/>
        <end position="123"/>
    </location>
</feature>
<feature type="helix" evidence="22">
    <location>
        <begin position="126"/>
        <end position="144"/>
    </location>
</feature>
<feature type="strand" evidence="22">
    <location>
        <begin position="149"/>
        <end position="152"/>
    </location>
</feature>
<feature type="strand" evidence="22">
    <location>
        <begin position="158"/>
        <end position="160"/>
    </location>
</feature>
<feature type="helix" evidence="22">
    <location>
        <begin position="163"/>
        <end position="169"/>
    </location>
</feature>
<feature type="turn" evidence="22">
    <location>
        <begin position="173"/>
        <end position="175"/>
    </location>
</feature>
<feature type="strand" evidence="22">
    <location>
        <begin position="176"/>
        <end position="179"/>
    </location>
</feature>
<feature type="turn" evidence="22">
    <location>
        <begin position="181"/>
        <end position="183"/>
    </location>
</feature>
<feature type="strand" evidence="23">
    <location>
        <begin position="189"/>
        <end position="193"/>
    </location>
</feature>
<feature type="helix" evidence="22">
    <location>
        <begin position="194"/>
        <end position="201"/>
    </location>
</feature>
<feature type="strand" evidence="22">
    <location>
        <begin position="208"/>
        <end position="215"/>
    </location>
</feature>
<feature type="strand" evidence="22">
    <location>
        <begin position="221"/>
        <end position="232"/>
    </location>
</feature>
<feature type="strand" evidence="22">
    <location>
        <begin position="238"/>
        <end position="247"/>
    </location>
</feature>
<feature type="helix" evidence="22">
    <location>
        <begin position="249"/>
        <end position="265"/>
    </location>
</feature>
<feature type="helix" evidence="22">
    <location>
        <begin position="271"/>
        <end position="285"/>
    </location>
</feature>
<feature type="strand" evidence="22">
    <location>
        <begin position="286"/>
        <end position="288"/>
    </location>
</feature>
<feature type="strand" evidence="22">
    <location>
        <begin position="290"/>
        <end position="297"/>
    </location>
</feature>
<feature type="strand" evidence="22">
    <location>
        <begin position="300"/>
        <end position="306"/>
    </location>
</feature>
<feature type="strand" evidence="22">
    <location>
        <begin position="316"/>
        <end position="324"/>
    </location>
</feature>
<feature type="strand" evidence="22">
    <location>
        <begin position="326"/>
        <end position="328"/>
    </location>
</feature>
<feature type="strand" evidence="22">
    <location>
        <begin position="330"/>
        <end position="340"/>
    </location>
</feature>
<feature type="helix" evidence="22">
    <location>
        <begin position="345"/>
        <end position="373"/>
    </location>
</feature>
<feature type="turn" evidence="22">
    <location>
        <begin position="380"/>
        <end position="382"/>
    </location>
</feature>
<feature type="helix" evidence="22">
    <location>
        <begin position="387"/>
        <end position="399"/>
    </location>
</feature>
<feature type="strand" evidence="22">
    <location>
        <begin position="405"/>
        <end position="412"/>
    </location>
</feature>
<feature type="helix" evidence="22">
    <location>
        <begin position="415"/>
        <end position="420"/>
    </location>
</feature>
<feature type="helix" evidence="22">
    <location>
        <begin position="423"/>
        <end position="439"/>
    </location>
</feature>
<feature type="strand" evidence="22">
    <location>
        <begin position="446"/>
        <end position="451"/>
    </location>
</feature>
<feature type="strand" evidence="22">
    <location>
        <begin position="454"/>
        <end position="459"/>
    </location>
</feature>
<feature type="helix" evidence="22">
    <location>
        <begin position="464"/>
        <end position="477"/>
    </location>
</feature>
<feature type="strand" evidence="22">
    <location>
        <begin position="482"/>
        <end position="484"/>
    </location>
</feature>
<feature type="strand" evidence="22">
    <location>
        <begin position="487"/>
        <end position="489"/>
    </location>
</feature>
<feature type="strand" evidence="22">
    <location>
        <begin position="492"/>
        <end position="498"/>
    </location>
</feature>
<feature type="helix" evidence="22">
    <location>
        <begin position="505"/>
        <end position="521"/>
    </location>
</feature>
<feature type="strand" evidence="22">
    <location>
        <begin position="522"/>
        <end position="531"/>
    </location>
</feature>
<feature type="helix" evidence="22">
    <location>
        <begin position="532"/>
        <end position="534"/>
    </location>
</feature>
<feature type="helix" evidence="20">
    <location>
        <begin position="544"/>
        <end position="549"/>
    </location>
</feature>
<feature type="turn" evidence="20">
    <location>
        <begin position="552"/>
        <end position="555"/>
    </location>
</feature>
<feature type="strand" evidence="20">
    <location>
        <begin position="557"/>
        <end position="569"/>
    </location>
</feature>
<feature type="strand" evidence="20">
    <location>
        <begin position="572"/>
        <end position="583"/>
    </location>
</feature>
<feature type="turn" evidence="20">
    <location>
        <begin position="584"/>
        <end position="586"/>
    </location>
</feature>
<feature type="strand" evidence="20">
    <location>
        <begin position="587"/>
        <end position="589"/>
    </location>
</feature>
<feature type="helix" evidence="20">
    <location>
        <begin position="591"/>
        <end position="594"/>
    </location>
</feature>
<feature type="turn" evidence="20">
    <location>
        <begin position="595"/>
        <end position="597"/>
    </location>
</feature>
<feature type="helix" evidence="20">
    <location>
        <begin position="607"/>
        <end position="623"/>
    </location>
</feature>
<feature type="strand" evidence="20">
    <location>
        <begin position="632"/>
        <end position="636"/>
    </location>
</feature>
<feature type="turn" evidence="20">
    <location>
        <begin position="637"/>
        <end position="640"/>
    </location>
</feature>
<feature type="turn" evidence="21">
    <location>
        <begin position="643"/>
        <end position="645"/>
    </location>
</feature>
<feature type="helix" evidence="20">
    <location>
        <begin position="648"/>
        <end position="656"/>
    </location>
</feature>
<feature type="strand" evidence="20">
    <location>
        <begin position="657"/>
        <end position="659"/>
    </location>
</feature>
<feature type="strand" evidence="20">
    <location>
        <begin position="664"/>
        <end position="668"/>
    </location>
</feature>
<feature type="helix" evidence="20">
    <location>
        <begin position="670"/>
        <end position="672"/>
    </location>
</feature>
<feature type="turn" evidence="20">
    <location>
        <begin position="675"/>
        <end position="677"/>
    </location>
</feature>
<feature type="helix" evidence="20">
    <location>
        <begin position="680"/>
        <end position="688"/>
    </location>
</feature>
<feature type="turn" evidence="20">
    <location>
        <begin position="689"/>
        <end position="691"/>
    </location>
</feature>
<feature type="strand" evidence="20">
    <location>
        <begin position="693"/>
        <end position="696"/>
    </location>
</feature>
<feature type="helix" evidence="22">
    <location>
        <begin position="703"/>
        <end position="711"/>
    </location>
</feature>
<feature type="strand" evidence="20">
    <location>
        <begin position="715"/>
        <end position="719"/>
    </location>
</feature>
<feature type="helix" evidence="20">
    <location>
        <begin position="721"/>
        <end position="729"/>
    </location>
</feature>
<feature type="helix" evidence="20">
    <location>
        <begin position="731"/>
        <end position="746"/>
    </location>
</feature>
<feature type="strand" evidence="20">
    <location>
        <begin position="750"/>
        <end position="754"/>
    </location>
</feature>
<feature type="helix" evidence="20">
    <location>
        <begin position="759"/>
        <end position="767"/>
    </location>
</feature>
<feature type="strand" evidence="20">
    <location>
        <begin position="772"/>
        <end position="775"/>
    </location>
</feature>
<feature type="turn" evidence="20">
    <location>
        <begin position="776"/>
        <end position="778"/>
    </location>
</feature>
<feature type="helix" evidence="20">
    <location>
        <begin position="784"/>
        <end position="786"/>
    </location>
</feature>
<feature type="helix" evidence="20">
    <location>
        <begin position="787"/>
        <end position="793"/>
    </location>
</feature>
<accession>P76129</accession>
<accession>P76872</accession>
<accession>P77708</accession>
<reference key="1">
    <citation type="journal article" date="2000" name="Biochemistry">
        <title>Dos, a heme-binding PAS protein from Escherichia coli, is a direct oxygen sensor.</title>
        <authorList>
            <person name="Delgado-Nixon V.M."/>
            <person name="Gonzalez G."/>
            <person name="Gilles-Gonzalez M.-A."/>
        </authorList>
    </citation>
    <scope>NUCLEOTIDE SEQUENCE [GENOMIC DNA]</scope>
    <scope>HEME-BINDING</scope>
</reference>
<reference key="2">
    <citation type="journal article" date="1996" name="DNA Res.">
        <title>A 570-kb DNA sequence of the Escherichia coli K-12 genome corresponding to the 28.0-40.1 min region on the linkage map.</title>
        <authorList>
            <person name="Aiba H."/>
            <person name="Baba T."/>
            <person name="Fujita K."/>
            <person name="Hayashi K."/>
            <person name="Inada T."/>
            <person name="Isono K."/>
            <person name="Itoh T."/>
            <person name="Kasai H."/>
            <person name="Kashimoto K."/>
            <person name="Kimura S."/>
            <person name="Kitakawa M."/>
            <person name="Kitagawa M."/>
            <person name="Makino K."/>
            <person name="Miki T."/>
            <person name="Mizobuchi K."/>
            <person name="Mori H."/>
            <person name="Mori T."/>
            <person name="Motomura K."/>
            <person name="Nakade S."/>
            <person name="Nakamura Y."/>
            <person name="Nashimoto H."/>
            <person name="Nishio Y."/>
            <person name="Oshima T."/>
            <person name="Saito N."/>
            <person name="Sampei G."/>
            <person name="Seki Y."/>
            <person name="Sivasundaram S."/>
            <person name="Tagami H."/>
            <person name="Takeda J."/>
            <person name="Takemoto K."/>
            <person name="Takeuchi Y."/>
            <person name="Wada C."/>
            <person name="Yamamoto Y."/>
            <person name="Horiuchi T."/>
        </authorList>
    </citation>
    <scope>NUCLEOTIDE SEQUENCE [LARGE SCALE GENOMIC DNA]</scope>
    <source>
        <strain>K12 / W3110 / ATCC 27325 / DSM 5911</strain>
    </source>
</reference>
<reference key="3">
    <citation type="journal article" date="1997" name="Science">
        <title>The complete genome sequence of Escherichia coli K-12.</title>
        <authorList>
            <person name="Blattner F.R."/>
            <person name="Plunkett G. III"/>
            <person name="Bloch C.A."/>
            <person name="Perna N.T."/>
            <person name="Burland V."/>
            <person name="Riley M."/>
            <person name="Collado-Vides J."/>
            <person name="Glasner J.D."/>
            <person name="Rode C.K."/>
            <person name="Mayhew G.F."/>
            <person name="Gregor J."/>
            <person name="Davis N.W."/>
            <person name="Kirkpatrick H.A."/>
            <person name="Goeden M.A."/>
            <person name="Rose D.J."/>
            <person name="Mau B."/>
            <person name="Shao Y."/>
        </authorList>
    </citation>
    <scope>NUCLEOTIDE SEQUENCE [LARGE SCALE GENOMIC DNA]</scope>
    <source>
        <strain>K12 / MG1655 / ATCC 47076</strain>
    </source>
</reference>
<reference key="4">
    <citation type="journal article" date="2006" name="Mol. Syst. Biol.">
        <title>Highly accurate genome sequences of Escherichia coli K-12 strains MG1655 and W3110.</title>
        <authorList>
            <person name="Hayashi K."/>
            <person name="Morooka N."/>
            <person name="Yamamoto Y."/>
            <person name="Fujita K."/>
            <person name="Isono K."/>
            <person name="Choi S."/>
            <person name="Ohtsubo E."/>
            <person name="Baba T."/>
            <person name="Wanner B.L."/>
            <person name="Mori H."/>
            <person name="Horiuchi T."/>
        </authorList>
    </citation>
    <scope>NUCLEOTIDE SEQUENCE [LARGE SCALE GENOMIC DNA]</scope>
    <source>
        <strain>K12 / W3110 / ATCC 27325 / DSM 5911</strain>
    </source>
</reference>
<reference key="5">
    <citation type="journal article" date="2002" name="Biochemistry">
        <title>Nature of the displaceable heme-axial residue in the EcDos protein, a heme-based sensor from Escherichia coli.</title>
        <authorList>
            <person name="Gonzalez G."/>
            <person name="Dioum E.M."/>
            <person name="Bertolucci C.M."/>
            <person name="Tomita T."/>
            <person name="Ikeda-Saito M."/>
            <person name="Cheesman M.R."/>
            <person name="Watmough N.J."/>
            <person name="Gilles-Gonzalez M.-A."/>
        </authorList>
    </citation>
    <scope>MUTAGENESIS OF MET-87 AND ARG-89</scope>
</reference>
<reference key="6">
    <citation type="journal article" date="2002" name="J. Biol. Chem.">
        <title>Characterization of a direct oxygen sensor heme protein from Escherichia coli. Effects of the heme redox states and mutations at the heme-binding site on catalysis and structure.</title>
        <authorList>
            <person name="Sasakura Y."/>
            <person name="Hirata S."/>
            <person name="Sugiyama S."/>
            <person name="Suzuki S."/>
            <person name="Taguchi S."/>
            <person name="Watanabe M."/>
            <person name="Matsui T."/>
            <person name="Sagami I."/>
            <person name="Shimizu T."/>
        </authorList>
    </citation>
    <scope>CHARACTERIZATION</scope>
    <scope>HOMOTETRAMER SUBUNIT</scope>
    <scope>MUTAGENESIS OF HIS-69 AND HIS-75</scope>
    <source>
        <strain>K12 / JM109 / ATCC 53323</strain>
    </source>
</reference>
<reference key="7">
    <citation type="journal article" date="2002" name="J. Biol. Chem.">
        <title>Stationary and time-resolved resonance Raman spectra of His77 and Met95 mutants of the isolated heme domain of a direct oxygen sensor from Escherichia coli.</title>
        <authorList>
            <person name="Sato A."/>
            <person name="Sasakura Y."/>
            <person name="Sugiyama S."/>
            <person name="Sagami I."/>
            <person name="Shimizu T."/>
            <person name="Mizutani Y."/>
            <person name="Kitagawa T."/>
        </authorList>
    </citation>
    <scope>RESONANCE RAMAN SPECTROSCOPY</scope>
    <scope>MUTAGENESIS OF MET-87</scope>
</reference>
<reference key="8">
    <citation type="journal article" date="2003" name="Biochemistry">
        <title>Ligand binding dynamics to the heme domain of the oxygen sensor Dos from Escherichia coli.</title>
        <authorList>
            <person name="Liebl U."/>
            <person name="Bouzhir-Sima L."/>
            <person name="Kiger L."/>
            <person name="Marden M.C."/>
            <person name="Lambry J.-C."/>
            <person name="Negrerie M."/>
            <person name="Vos M.H."/>
        </authorList>
    </citation>
    <scope>ABSORPTION SPECTROSCOPY</scope>
</reference>
<reference key="9">
    <citation type="journal article" date="2003" name="J. Biol. Chem.">
        <title>Relationships between heme incorporation, tetramer formation, and catalysis of a heme-regulated phosphodiesterase from Escherichia coli: a study of deletion and site-directed mutants.</title>
        <authorList>
            <person name="Yoshimura T."/>
            <person name="Sagami I."/>
            <person name="Sasakura Y."/>
            <person name="Shimizu T."/>
        </authorList>
    </citation>
    <scope>MUTAGENESIS OF HIS-69; HIS-582 AND HIS-586</scope>
</reference>
<reference key="10">
    <citation type="journal article" date="2005" name="J. Bacteriol.">
        <title>The ubiquitous protein domain EAL is a cyclic diguanylate-specific phosphodiesterase: enzymatically active and inactive EAL domains.</title>
        <authorList>
            <person name="Schmidt A.J."/>
            <person name="Ryjenkov D.A."/>
            <person name="Gomelsky M."/>
        </authorList>
    </citation>
    <scope>CHARACTERIZATION OF THE EAL DOMAIN AS A CYCLIC DINUCLEOTIDE DI-GMP PHOSPHODIESTERASE</scope>
    <source>
        <strain>K12 / MG1655 / ATCC 47076</strain>
    </source>
</reference>
<reference key="11">
    <citation type="journal article" date="2006" name="Chem. Lett.">
        <title>Phosphodiesterase activity of Ec DOS, a heme-regulated enzyme from Escherichia coli, toward 3',5'-cyclic diguanylic acid is obviously enhanced by O2 and CO binding.</title>
        <authorList>
            <person name="Takahashi H."/>
            <person name="Shimizu T."/>
        </authorList>
    </citation>
    <scope>CHARACTERIZATION OF CYCLIC DI-GMP ACTIVITY OF THE FULL-LENGTH PROTEIN</scope>
</reference>
<reference key="12">
    <citation type="journal article" date="2006" name="FEBS J.">
        <title>Critical roles of Leu99 and Leu115 at the heme distal side in auto-oxidation and the redox potential of a heme-regulated phosphodiesterase from Escherichia coli.</title>
        <authorList>
            <person name="Yokota N."/>
            <person name="Araki Y."/>
            <person name="Kurokawa H."/>
            <person name="Ito O."/>
            <person name="Igarashi J."/>
            <person name="Shimizu T."/>
        </authorList>
    </citation>
    <scope>MUTAGENESIS OF LEU-91 AND LEU-107</scope>
    <source>
        <strain>K12 / JM109 / ATCC 53323</strain>
    </source>
</reference>
<reference key="13">
    <citation type="journal article" date="2006" name="J. Biol. Chem.">
        <title>Genome-wide transcriptional profile of Escherichia coli in response to high levels of the second messenger 3',5'-cyclic diguanylic acid.</title>
        <authorList>
            <person name="Mendez-Ortiz M.M."/>
            <person name="Hyodo M."/>
            <person name="Hayakawa Y."/>
            <person name="Membrillo-Hernandez J."/>
        </authorList>
    </citation>
    <scope>OPERON STRUCTURE</scope>
    <source>
        <strain>K12 / MC4100 / ATCC 35695 / DSM 6574</strain>
    </source>
</reference>
<reference key="14">
    <citation type="journal article" date="2007" name="J. Biol. Chem.">
        <title>Critical role of the heme axial ligand, Met95, in locking catalysis of the phosphodiesterase from Escherichia coli (Ec DOS) toward cyclic diGMP.</title>
        <authorList>
            <person name="Tanaka A."/>
            <person name="Takahashi H."/>
            <person name="Shimizu T."/>
        </authorList>
    </citation>
    <scope>ROLE OF ARG-89 IN O(2) STABILIZATION</scope>
    <scope>MUTAGENESIS OF MET-87 AND ARG-89</scope>
    <source>
        <strain>K12 / JM109 / ATCC 53323</strain>
    </source>
</reference>
<reference key="15">
    <citation type="journal article" date="2009" name="Biochemistry">
        <title>An oxygen-sensing diguanylate cyclase and phosphodiesterase couple for c-di-GMP control.</title>
        <authorList>
            <person name="Tuckerman J.R."/>
            <person name="Gonzalez G."/>
            <person name="Sousa E.H."/>
            <person name="Wan X."/>
            <person name="Saito J.A."/>
            <person name="Alam M."/>
            <person name="Gilles-Gonzalez M.A."/>
        </authorList>
    </citation>
    <scope>CATALYTIC ACTIVITY</scope>
    <scope>ACTIVITY REGULATION</scope>
    <scope>INTERACTION WITH DOSC</scope>
    <scope>OPERON STRUCTURE</scope>
</reference>
<reference key="16">
    <citation type="journal article" date="2009" name="J. Biol. Chem.">
        <title>Heme ligand binding properties and intradimer interactions in the full-length sensor protein dos from Escherichia coli and its isolated heme domain.</title>
        <authorList>
            <person name="Lechauve C."/>
            <person name="Bouzhir-Sima L."/>
            <person name="Yamashita T."/>
            <person name="Marden M.C."/>
            <person name="Vos M.H."/>
            <person name="Liebl U."/>
            <person name="Kiger L."/>
        </authorList>
    </citation>
    <scope>HOMODIMER SUBUNIT</scope>
</reference>
<reference key="17">
    <citation type="journal article" date="2009" name="Microbiology">
        <title>Gene expression patterns and differential input into curli fimbriae regulation of all GGDEF/EAL domain proteins in Escherichia coli.</title>
        <authorList>
            <person name="Sommerfeldt N."/>
            <person name="Possling A."/>
            <person name="Becker G."/>
            <person name="Pesavento C."/>
            <person name="Tschowri N."/>
            <person name="Hengge R."/>
        </authorList>
    </citation>
    <scope>INDUCTION</scope>
    <scope>RPOS-DEPENDENCE</scope>
    <source>
        <strain>K12 / W3110 / ATCC 27325 / DSM 5911</strain>
    </source>
</reference>
<reference key="18">
    <citation type="journal article" date="2010" name="FEMS Immunol. Med. Microbiol.">
        <title>The yddV-dos operon controls biofilm formation through the regulation of genes encoding curli fibers' subunits in aerobically growing Escherichia coli.</title>
        <authorList>
            <person name="Tagliabue L."/>
            <person name="Maciag A."/>
            <person name="Antoniani D."/>
            <person name="Landini P."/>
        </authorList>
    </citation>
    <scope>FUNCTION IN REGULATION OF CSGBAC EXPRESSION</scope>
    <scope>INDUCTION</scope>
    <source>
        <strain>K12 / MG1655 / ATCC 47076</strain>
    </source>
</reference>
<reference key="19">
    <citation type="journal article" date="2015" name="J. Bacteriol.">
        <title>Systematic nomenclature for GGDEF and EAL domain-containing cyclic di-GMP turnover proteins of Escherichia coli.</title>
        <authorList>
            <person name="Hengge R."/>
            <person name="Galperin M.Y."/>
            <person name="Ghigo J.M."/>
            <person name="Gomelsky M."/>
            <person name="Green J."/>
            <person name="Hughes K.T."/>
            <person name="Jenal U."/>
            <person name="Landini P."/>
        </authorList>
    </citation>
    <scope>NOMENCLATURE</scope>
</reference>
<reference key="20">
    <citation type="journal article" date="2002" name="Acta Crystallogr. D">
        <title>Cloning, purification, crystallization and preliminary X-ray analysis of DOS heme domain, a new heme oxygen sensor in Escherichia coli.</title>
        <authorList>
            <person name="Park H."/>
            <person name="Suquet C."/>
            <person name="Savenkova M.I."/>
            <person name="Satterlee J.D."/>
            <person name="Kang C."/>
        </authorList>
    </citation>
    <scope>CRYSTALLIZATION OF 1-139</scope>
    <source>
        <strain>K12</strain>
    </source>
</reference>
<reference key="21">
    <citation type="journal article" date="2004" name="Biochemistry">
        <title>Insights into signal transduction involving PAS domain oxygen-sensing heme proteins from the X-ray crystal structure of Escherichia coli Dos heme domain (Ec DosH).</title>
        <authorList>
            <person name="Park H."/>
            <person name="Suquet C."/>
            <person name="Satterlee J.D."/>
            <person name="Kang C."/>
        </authorList>
    </citation>
    <scope>X-RAY CRYSTALLOGRAPHY (1.8 ANGSTROMS) OF 8-136 IN COMPLEX WITH AND WITHOUT O(2)</scope>
    <source>
        <strain>K12</strain>
    </source>
</reference>
<reference key="22">
    <citation type="journal article" date="2004" name="J. Biol. Chem.">
        <title>A redox-controlled molecular switch revealed by the crystal structure of a bacterial heme PAS sensor.</title>
        <authorList>
            <person name="Kurokawa H."/>
            <person name="Lee D.-S."/>
            <person name="Watanabe M."/>
            <person name="Sagami I."/>
            <person name="Mikami B."/>
            <person name="Raman C.S."/>
            <person name="Shimizu T."/>
        </authorList>
    </citation>
    <scope>X-RAY CRYSTALLOGRAPHY (1.32 ANGSTROMS) OF 1-139 IN AN ACTIVE FE(2+)-BOUND FORM</scope>
    <scope>INACTIVE FE(3+)-BOUND FORM</scope>
    <source>
        <strain>K12 / JM109 / ATCC 53323</strain>
    </source>
</reference>
<protein>
    <recommendedName>
        <fullName>Oxygen sensor protein DosP</fullName>
        <ecNumber>3.1.4.52</ecNumber>
    </recommendedName>
    <alternativeName>
        <fullName>Direct oxygen-sensing phosphodiesterase</fullName>
        <shortName>Direct oxygen sensor protein</shortName>
    </alternativeName>
    <alternativeName>
        <fullName>Ec DOS</fullName>
    </alternativeName>
    <alternativeName>
        <fullName>Heme-regulated cyclic di-GMP phosphodiesterase</fullName>
    </alternativeName>
</protein>
<proteinExistence type="evidence at protein level"/>
<keyword id="KW-0002">3D-structure</keyword>
<keyword id="KW-0973">c-di-GMP</keyword>
<keyword id="KW-0349">Heme</keyword>
<keyword id="KW-0378">Hydrolase</keyword>
<keyword id="KW-0408">Iron</keyword>
<keyword id="KW-0460">Magnesium</keyword>
<keyword id="KW-0479">Metal-binding</keyword>
<keyword id="KW-1185">Reference proteome</keyword>
<keyword id="KW-0677">Repeat</keyword>
<keyword id="KW-0716">Sensory transduction</keyword>
<keyword id="KW-0804">Transcription</keyword>
<keyword id="KW-0805">Transcription regulation</keyword>
<comment type="function">
    <text evidence="5 10 16">Heme-based oxygen sensor protein displaying phosphodiesterase (PDE) activity toward c-di-GMP in response to oxygen availability. Involved in the modulation of intracellular c-di-GMP levels, in association with DosC which catalyzes the biosynthesis of c-di-GMP (diguanylate cyclase activity). Cyclic-di-GMP is a second messenger which controls cell surface-associated traits in bacteria. Has very poor PDE activity on cAMP (PubMed:15995192) but is not active with cGMP, bis(p-nitrophenyl) phosphate or p-nitrophenyl phosphate (PubMed:11970957). Via its PDE activity on c-di-GMP, DosP regulates biofilm formation through the repression of transcription of the csgBAC operon, which encodes curli structural subunits.</text>
</comment>
<comment type="catalytic activity">
    <reaction evidence="14">
        <text>3',3'-c-di-GMP + H2O = 5'-phosphoguanylyl(3'-&gt;5')guanosine + H(+)</text>
        <dbReference type="Rhea" id="RHEA:24902"/>
        <dbReference type="ChEBI" id="CHEBI:15377"/>
        <dbReference type="ChEBI" id="CHEBI:15378"/>
        <dbReference type="ChEBI" id="CHEBI:58754"/>
        <dbReference type="ChEBI" id="CHEBI:58805"/>
        <dbReference type="EC" id="3.1.4.52"/>
    </reaction>
</comment>
<comment type="cofactor">
    <cofactor>
        <name>heme</name>
        <dbReference type="ChEBI" id="CHEBI:30413"/>
    </cofactor>
</comment>
<comment type="cofactor">
    <cofactor>
        <name>Mg(2+)</name>
        <dbReference type="ChEBI" id="CHEBI:18420"/>
    </cofactor>
</comment>
<comment type="activity regulation">
    <text evidence="10 12 14">Has c-di-GMP PDE activity in both Fe(2+) and Fe(3+)-bound forms; this activity is increased 6-7 fold by binding of O(2) and CO (PubMed:15995192) and NO (PubMed:17535805). Has cAMP PDE activity only when the heme is in the Fe(2+) form. cAMP PDE activity is inhibited by oxidation of the heme iron and by binding of external ligands such as CO and NO. Also strongly inhibited by etazolate hydrochloride, a selective cAMP PDE inhibitor. PDE activity is inhibited in the absence of oxygen.</text>
</comment>
<comment type="biophysicochemical properties">
    <kinetics>
        <KM>36 uM for c-di-GMP</KM>
        <text evidence="10">For the EAL domain, residues 532-799.</text>
    </kinetics>
</comment>
<comment type="subunit">
    <text evidence="5 9 15">Homodimer (PubMed:19864414); has been previously suggested to be a homotetramer based on size exclusion chromatography (PubMed:11970957). Forms a complex with DosC.</text>
</comment>
<comment type="induction">
    <text evidence="13 16">Expressed in the late exponential growth phase and at higher levels in the stationary phase. A member of the dosCP operon. Expression is RpoS dependent and is higher at 28 degrees Celsius than at 37 degrees Celsius.</text>
</comment>
<comment type="domain">
    <text evidence="10">The EAL domain (residues 532 to 799) is a cyclic dinucleotide di-GMP (c-di-GMP) PDE hydrolyzing c-di-GMP to 5'pGpG; it has no activity on cAMP.</text>
</comment>
<comment type="domain">
    <text>Binding of an external ligand to the heme located in the N-terminal sensory domain displaces the distal heme ligand from Met-87 to the ligand and triggers a conformational change that regulates the activity of the C-terminal catalytic domain.</text>
</comment>
<comment type="domain">
    <text>The heme-PAS domain (residues 1-139) forms homodimers.</text>
</comment>
<comment type="PTM">
    <text>The heme distal ligand is coordinated by Met-87 in the active Fe(2+) (ferrous) form, by O(2) in the O(2)-bound form and by H(2)O in the inactive Fe(3+) (ferric) form.</text>
</comment>
<comment type="miscellaneous">
    <text>Binds O(2) with a dissociation constant of about 74 uM.</text>
</comment>
<name>DOSP_ECOLI</name>
<gene>
    <name type="primary">dosP</name>
    <name type="synonym">dos</name>
    <name evidence="17" type="synonym">pdeO</name>
    <name type="synonym">yddU</name>
    <name type="ordered locus">b1489</name>
    <name type="ordered locus">JW1484</name>
</gene>
<organism>
    <name type="scientific">Escherichia coli (strain K12)</name>
    <dbReference type="NCBI Taxonomy" id="83333"/>
    <lineage>
        <taxon>Bacteria</taxon>
        <taxon>Pseudomonadati</taxon>
        <taxon>Pseudomonadota</taxon>
        <taxon>Gammaproteobacteria</taxon>
        <taxon>Enterobacterales</taxon>
        <taxon>Enterobacteriaceae</taxon>
        <taxon>Escherichia</taxon>
    </lineage>
</organism>
<dbReference type="EC" id="3.1.4.52"/>
<dbReference type="EMBL" id="U00096">
    <property type="protein sequence ID" value="AAC74562.2"/>
    <property type="molecule type" value="Genomic_DNA"/>
</dbReference>
<dbReference type="EMBL" id="AP009048">
    <property type="protein sequence ID" value="BAA15154.1"/>
    <property type="molecule type" value="Genomic_DNA"/>
</dbReference>
<dbReference type="PIR" id="D64902">
    <property type="entry name" value="D64902"/>
</dbReference>
<dbReference type="RefSeq" id="NP_416006.4">
    <property type="nucleotide sequence ID" value="NC_000913.3"/>
</dbReference>
<dbReference type="RefSeq" id="WP_001360132.1">
    <property type="nucleotide sequence ID" value="NZ_LN832404.1"/>
</dbReference>
<dbReference type="PDB" id="1S66">
    <property type="method" value="X-ray"/>
    <property type="resolution" value="1.80 A"/>
    <property type="chains" value="L/U=8-126"/>
</dbReference>
<dbReference type="PDB" id="1S67">
    <property type="method" value="X-ray"/>
    <property type="resolution" value="1.50 A"/>
    <property type="chains" value="L/U=8-126"/>
</dbReference>
<dbReference type="PDB" id="1V9Y">
    <property type="method" value="X-ray"/>
    <property type="resolution" value="1.32 A"/>
    <property type="chains" value="A/B=1-139"/>
</dbReference>
<dbReference type="PDB" id="1V9Z">
    <property type="method" value="X-ray"/>
    <property type="resolution" value="1.90 A"/>
    <property type="chains" value="A/B=1-139"/>
</dbReference>
<dbReference type="PDB" id="1VB6">
    <property type="method" value="X-ray"/>
    <property type="resolution" value="1.56 A"/>
    <property type="chains" value="A/B=1-139"/>
</dbReference>
<dbReference type="PDB" id="4HU3">
    <property type="method" value="X-ray"/>
    <property type="resolution" value="3.30 A"/>
    <property type="chains" value="A=529-799"/>
</dbReference>
<dbReference type="PDB" id="4HU4">
    <property type="method" value="X-ray"/>
    <property type="resolution" value="2.40 A"/>
    <property type="chains" value="A/B=529-799"/>
</dbReference>
<dbReference type="PDB" id="9BGV">
    <property type="method" value="EM"/>
    <property type="resolution" value="3.65 A"/>
    <property type="chains" value="A/B=1-799"/>
</dbReference>
<dbReference type="PDB" id="9BKV">
    <property type="method" value="EM"/>
    <property type="resolution" value="3.43 A"/>
    <property type="chains" value="A/B=1-799"/>
</dbReference>
<dbReference type="PDB" id="9CDR">
    <property type="method" value="EM"/>
    <property type="resolution" value="3.91 A"/>
    <property type="chains" value="A/B=1-798"/>
</dbReference>
<dbReference type="PDB" id="9CE0">
    <property type="method" value="EM"/>
    <property type="resolution" value="3.97 A"/>
    <property type="chains" value="A/B=1-798"/>
</dbReference>
<dbReference type="PDB" id="9CLO">
    <property type="method" value="EM"/>
    <property type="resolution" value="3.10 A"/>
    <property type="chains" value="A/B=12-798"/>
</dbReference>
<dbReference type="PDB" id="9CMF">
    <property type="method" value="EM"/>
    <property type="resolution" value="3.11 A"/>
    <property type="chains" value="A/B=12-799"/>
</dbReference>
<dbReference type="PDBsum" id="1S66"/>
<dbReference type="PDBsum" id="1S67"/>
<dbReference type="PDBsum" id="1V9Y"/>
<dbReference type="PDBsum" id="1V9Z"/>
<dbReference type="PDBsum" id="1VB6"/>
<dbReference type="PDBsum" id="4HU3"/>
<dbReference type="PDBsum" id="4HU4"/>
<dbReference type="PDBsum" id="9BGV"/>
<dbReference type="PDBsum" id="9BKV"/>
<dbReference type="PDBsum" id="9CDR"/>
<dbReference type="PDBsum" id="9CE0"/>
<dbReference type="PDBsum" id="9CLO"/>
<dbReference type="PDBsum" id="9CMF"/>
<dbReference type="EMDB" id="EMD-44524"/>
<dbReference type="EMDB" id="EMD-44646"/>
<dbReference type="EMDB" id="EMD-45485"/>
<dbReference type="EMDB" id="EMD-45489"/>
<dbReference type="EMDB" id="EMD-45727"/>
<dbReference type="EMDB" id="EMD-45746"/>
<dbReference type="SMR" id="P76129"/>
<dbReference type="BioGRID" id="4259419">
    <property type="interactions" value="18"/>
</dbReference>
<dbReference type="BioGRID" id="850182">
    <property type="interactions" value="1"/>
</dbReference>
<dbReference type="ComplexPortal" id="CPX-3982">
    <property type="entry name" value="dosPC diguanylate cyclase/c-di-GMP phosphodiesterase complex"/>
</dbReference>
<dbReference type="FunCoup" id="P76129">
    <property type="interactions" value="3"/>
</dbReference>
<dbReference type="IntAct" id="P76129">
    <property type="interactions" value="3"/>
</dbReference>
<dbReference type="STRING" id="511145.b1489"/>
<dbReference type="PaxDb" id="511145-b1489"/>
<dbReference type="EnsemblBacteria" id="AAC74562">
    <property type="protein sequence ID" value="AAC74562"/>
    <property type="gene ID" value="b1489"/>
</dbReference>
<dbReference type="GeneID" id="945815"/>
<dbReference type="KEGG" id="ecj:JW1484"/>
<dbReference type="KEGG" id="eco:b1489"/>
<dbReference type="PATRIC" id="fig|1411691.4.peg.778"/>
<dbReference type="EchoBASE" id="EB3553"/>
<dbReference type="eggNOG" id="COG2199">
    <property type="taxonomic scope" value="Bacteria"/>
</dbReference>
<dbReference type="eggNOG" id="COG2200">
    <property type="taxonomic scope" value="Bacteria"/>
</dbReference>
<dbReference type="eggNOG" id="COG2202">
    <property type="taxonomic scope" value="Bacteria"/>
</dbReference>
<dbReference type="HOGENOM" id="CLU_000445_70_20_6"/>
<dbReference type="InParanoid" id="P76129"/>
<dbReference type="OMA" id="WHDPVLG"/>
<dbReference type="OrthoDB" id="9804951at2"/>
<dbReference type="PhylomeDB" id="P76129"/>
<dbReference type="BioCyc" id="EcoCyc:G6783-MONOMER"/>
<dbReference type="BioCyc" id="MetaCyc:G6783-MONOMER"/>
<dbReference type="SABIO-RK" id="P76129"/>
<dbReference type="EvolutionaryTrace" id="P76129"/>
<dbReference type="PRO" id="PR:P76129"/>
<dbReference type="Proteomes" id="UP000000625">
    <property type="component" value="Chromosome"/>
</dbReference>
<dbReference type="GO" id="GO:0005886">
    <property type="term" value="C:plasma membrane"/>
    <property type="evidence" value="ECO:0000318"/>
    <property type="project" value="GO_Central"/>
</dbReference>
<dbReference type="GO" id="GO:0071111">
    <property type="term" value="F:cyclic-guanylate-specific phosphodiesterase activity"/>
    <property type="evidence" value="ECO:0000314"/>
    <property type="project" value="EcoCyc"/>
</dbReference>
<dbReference type="GO" id="GO:0020037">
    <property type="term" value="F:heme binding"/>
    <property type="evidence" value="ECO:0000314"/>
    <property type="project" value="EcoCyc"/>
</dbReference>
<dbReference type="GO" id="GO:0000287">
    <property type="term" value="F:magnesium ion binding"/>
    <property type="evidence" value="ECO:0000315"/>
    <property type="project" value="EcoCyc"/>
</dbReference>
<dbReference type="GO" id="GO:0019826">
    <property type="term" value="F:oxygen sensor activity"/>
    <property type="evidence" value="ECO:0000314"/>
    <property type="project" value="CACAO"/>
</dbReference>
<dbReference type="GO" id="GO:0042803">
    <property type="term" value="F:protein homodimerization activity"/>
    <property type="evidence" value="ECO:0000314"/>
    <property type="project" value="EcoCyc"/>
</dbReference>
<dbReference type="GO" id="GO:1900190">
    <property type="term" value="P:regulation of single-species biofilm formation"/>
    <property type="evidence" value="ECO:0000318"/>
    <property type="project" value="GO_Central"/>
</dbReference>
<dbReference type="GO" id="GO:0070482">
    <property type="term" value="P:response to oxygen levels"/>
    <property type="evidence" value="ECO:0000314"/>
    <property type="project" value="ComplexPortal"/>
</dbReference>
<dbReference type="CDD" id="cd01948">
    <property type="entry name" value="EAL"/>
    <property type="match status" value="1"/>
</dbReference>
<dbReference type="CDD" id="cd01949">
    <property type="entry name" value="GGDEF"/>
    <property type="match status" value="1"/>
</dbReference>
<dbReference type="CDD" id="cd00130">
    <property type="entry name" value="PAS"/>
    <property type="match status" value="2"/>
</dbReference>
<dbReference type="FunFam" id="3.20.20.450:FF:000001">
    <property type="entry name" value="Cyclic di-GMP phosphodiesterase yahA"/>
    <property type="match status" value="1"/>
</dbReference>
<dbReference type="FunFam" id="3.30.450.20:FF:000170">
    <property type="entry name" value="Oxygen sensor protein DosP"/>
    <property type="match status" value="1"/>
</dbReference>
<dbReference type="Gene3D" id="3.30.70.270">
    <property type="match status" value="1"/>
</dbReference>
<dbReference type="Gene3D" id="3.20.20.450">
    <property type="entry name" value="EAL domain"/>
    <property type="match status" value="1"/>
</dbReference>
<dbReference type="Gene3D" id="3.30.450.20">
    <property type="entry name" value="PAS domain"/>
    <property type="match status" value="2"/>
</dbReference>
<dbReference type="InterPro" id="IPR052155">
    <property type="entry name" value="Biofilm_reg_signaling"/>
</dbReference>
<dbReference type="InterPro" id="IPR012226">
    <property type="entry name" value="Diguanyl_cyclase/Pdiesterase"/>
</dbReference>
<dbReference type="InterPro" id="IPR001633">
    <property type="entry name" value="EAL_dom"/>
</dbReference>
<dbReference type="InterPro" id="IPR035919">
    <property type="entry name" value="EAL_sf"/>
</dbReference>
<dbReference type="InterPro" id="IPR000160">
    <property type="entry name" value="GGDEF_dom"/>
</dbReference>
<dbReference type="InterPro" id="IPR029787">
    <property type="entry name" value="Nucleotide_cyclase"/>
</dbReference>
<dbReference type="InterPro" id="IPR001610">
    <property type="entry name" value="PAC"/>
</dbReference>
<dbReference type="InterPro" id="IPR000014">
    <property type="entry name" value="PAS"/>
</dbReference>
<dbReference type="InterPro" id="IPR000700">
    <property type="entry name" value="PAS-assoc_C"/>
</dbReference>
<dbReference type="InterPro" id="IPR035965">
    <property type="entry name" value="PAS-like_dom_sf"/>
</dbReference>
<dbReference type="InterPro" id="IPR043128">
    <property type="entry name" value="Rev_trsase/Diguanyl_cyclase"/>
</dbReference>
<dbReference type="NCBIfam" id="TIGR00254">
    <property type="entry name" value="GGDEF"/>
    <property type="match status" value="1"/>
</dbReference>
<dbReference type="NCBIfam" id="NF008467">
    <property type="entry name" value="PRK11359.1"/>
    <property type="match status" value="1"/>
</dbReference>
<dbReference type="NCBIfam" id="TIGR00229">
    <property type="entry name" value="sensory_box"/>
    <property type="match status" value="2"/>
</dbReference>
<dbReference type="PANTHER" id="PTHR44757:SF2">
    <property type="entry name" value="BIOFILM ARCHITECTURE MAINTENANCE PROTEIN MBAA"/>
    <property type="match status" value="1"/>
</dbReference>
<dbReference type="PANTHER" id="PTHR44757">
    <property type="entry name" value="DIGUANYLATE CYCLASE DGCP"/>
    <property type="match status" value="1"/>
</dbReference>
<dbReference type="Pfam" id="PF00563">
    <property type="entry name" value="EAL"/>
    <property type="match status" value="1"/>
</dbReference>
<dbReference type="Pfam" id="PF00990">
    <property type="entry name" value="GGDEF"/>
    <property type="match status" value="1"/>
</dbReference>
<dbReference type="Pfam" id="PF13426">
    <property type="entry name" value="PAS_9"/>
    <property type="match status" value="2"/>
</dbReference>
<dbReference type="PIRSF" id="PIRSF005925">
    <property type="entry name" value="Dos"/>
    <property type="match status" value="1"/>
</dbReference>
<dbReference type="SMART" id="SM00052">
    <property type="entry name" value="EAL"/>
    <property type="match status" value="1"/>
</dbReference>
<dbReference type="SMART" id="SM00267">
    <property type="entry name" value="GGDEF"/>
    <property type="match status" value="1"/>
</dbReference>
<dbReference type="SMART" id="SM00086">
    <property type="entry name" value="PAC"/>
    <property type="match status" value="2"/>
</dbReference>
<dbReference type="SMART" id="SM00091">
    <property type="entry name" value="PAS"/>
    <property type="match status" value="2"/>
</dbReference>
<dbReference type="SUPFAM" id="SSF141868">
    <property type="entry name" value="EAL domain-like"/>
    <property type="match status" value="1"/>
</dbReference>
<dbReference type="SUPFAM" id="SSF55073">
    <property type="entry name" value="Nucleotide cyclase"/>
    <property type="match status" value="1"/>
</dbReference>
<dbReference type="SUPFAM" id="SSF55785">
    <property type="entry name" value="PYP-like sensor domain (PAS domain)"/>
    <property type="match status" value="2"/>
</dbReference>
<dbReference type="PROSITE" id="PS50883">
    <property type="entry name" value="EAL"/>
    <property type="match status" value="1"/>
</dbReference>
<dbReference type="PROSITE" id="PS50887">
    <property type="entry name" value="GGDEF"/>
    <property type="match status" value="1"/>
</dbReference>
<dbReference type="PROSITE" id="PS50113">
    <property type="entry name" value="PAC"/>
    <property type="match status" value="1"/>
</dbReference>
<dbReference type="PROSITE" id="PS50112">
    <property type="entry name" value="PAS"/>
    <property type="match status" value="2"/>
</dbReference>